<keyword id="KW-0175">Coiled coil</keyword>
<keyword id="KW-0963">Cytoplasm</keyword>
<keyword id="KW-0967">Endosome</keyword>
<keyword id="KW-0472">Membrane</keyword>
<keyword id="KW-1185">Reference proteome</keyword>
<accession>Q871Y8</accession>
<accession>Q1K6T8</accession>
<proteinExistence type="inferred from homology"/>
<dbReference type="EMBL" id="BX294016">
    <property type="protein sequence ID" value="CAD70846.1"/>
    <property type="molecule type" value="Genomic_DNA"/>
</dbReference>
<dbReference type="EMBL" id="CM002240">
    <property type="protein sequence ID" value="EAA31583.1"/>
    <property type="molecule type" value="Genomic_DNA"/>
</dbReference>
<dbReference type="RefSeq" id="XP_960819.1">
    <property type="nucleotide sequence ID" value="XM_955726.2"/>
</dbReference>
<dbReference type="SMR" id="Q871Y8"/>
<dbReference type="FunCoup" id="Q871Y8">
    <property type="interactions" value="624"/>
</dbReference>
<dbReference type="STRING" id="367110.Q871Y8"/>
<dbReference type="PaxDb" id="5141-EFNCRP00000004016"/>
<dbReference type="EnsemblFungi" id="EAA31583">
    <property type="protein sequence ID" value="EAA31583"/>
    <property type="gene ID" value="NCU01282"/>
</dbReference>
<dbReference type="GeneID" id="3876971"/>
<dbReference type="KEGG" id="ncr:NCU01282"/>
<dbReference type="VEuPathDB" id="FungiDB:NCU01282"/>
<dbReference type="HOGENOM" id="CLU_071097_1_0_1"/>
<dbReference type="InParanoid" id="Q871Y8"/>
<dbReference type="OMA" id="MKQIHGG"/>
<dbReference type="OrthoDB" id="5592979at2759"/>
<dbReference type="Proteomes" id="UP000001805">
    <property type="component" value="Chromosome 2, Linkage Group V"/>
</dbReference>
<dbReference type="GO" id="GO:0009898">
    <property type="term" value="C:cytoplasmic side of plasma membrane"/>
    <property type="evidence" value="ECO:0000318"/>
    <property type="project" value="GO_Central"/>
</dbReference>
<dbReference type="GO" id="GO:0005829">
    <property type="term" value="C:cytosol"/>
    <property type="evidence" value="ECO:0007669"/>
    <property type="project" value="EnsemblFungi"/>
</dbReference>
<dbReference type="GO" id="GO:0000815">
    <property type="term" value="C:ESCRT III complex"/>
    <property type="evidence" value="ECO:0000318"/>
    <property type="project" value="GO_Central"/>
</dbReference>
<dbReference type="GO" id="GO:0005771">
    <property type="term" value="C:multivesicular body"/>
    <property type="evidence" value="ECO:0000318"/>
    <property type="project" value="GO_Central"/>
</dbReference>
<dbReference type="GO" id="GO:0042802">
    <property type="term" value="F:identical protein binding"/>
    <property type="evidence" value="ECO:0007669"/>
    <property type="project" value="EnsemblFungi"/>
</dbReference>
<dbReference type="GO" id="GO:1904669">
    <property type="term" value="P:ATP export"/>
    <property type="evidence" value="ECO:0007669"/>
    <property type="project" value="EnsemblFungi"/>
</dbReference>
<dbReference type="GO" id="GO:0070676">
    <property type="term" value="P:intralumenal vesicle formation"/>
    <property type="evidence" value="ECO:0007669"/>
    <property type="project" value="EnsemblFungi"/>
</dbReference>
<dbReference type="GO" id="GO:0032511">
    <property type="term" value="P:late endosome to vacuole transport via multivesicular body sorting pathway"/>
    <property type="evidence" value="ECO:0000318"/>
    <property type="project" value="GO_Central"/>
</dbReference>
<dbReference type="GO" id="GO:0007031">
    <property type="term" value="P:peroxisome organization"/>
    <property type="evidence" value="ECO:0007669"/>
    <property type="project" value="EnsemblFungi"/>
</dbReference>
<dbReference type="GO" id="GO:0043328">
    <property type="term" value="P:protein transport to vacuole involved in ubiquitin-dependent protein catabolic process via the multivesicular body sorting pathway"/>
    <property type="evidence" value="ECO:0007669"/>
    <property type="project" value="EnsemblFungi"/>
</dbReference>
<dbReference type="GO" id="GO:0061709">
    <property type="term" value="P:reticulophagy"/>
    <property type="evidence" value="ECO:0007669"/>
    <property type="project" value="EnsemblFungi"/>
</dbReference>
<dbReference type="GO" id="GO:0006900">
    <property type="term" value="P:vesicle budding from membrane"/>
    <property type="evidence" value="ECO:0000318"/>
    <property type="project" value="GO_Central"/>
</dbReference>
<dbReference type="Gene3D" id="1.10.287.1060">
    <property type="entry name" value="ESAT-6-like"/>
    <property type="match status" value="1"/>
</dbReference>
<dbReference type="InterPro" id="IPR005024">
    <property type="entry name" value="Snf7_fam"/>
</dbReference>
<dbReference type="PANTHER" id="PTHR22761">
    <property type="entry name" value="CHARGED MULTIVESICULAR BODY PROTEIN"/>
    <property type="match status" value="1"/>
</dbReference>
<dbReference type="PANTHER" id="PTHR22761:SF10">
    <property type="entry name" value="GH13992P"/>
    <property type="match status" value="1"/>
</dbReference>
<dbReference type="Pfam" id="PF03357">
    <property type="entry name" value="Snf7"/>
    <property type="match status" value="1"/>
</dbReference>
<evidence type="ECO:0000250" key="1"/>
<evidence type="ECO:0000255" key="2"/>
<evidence type="ECO:0000305" key="3"/>
<name>SNF7_NEUCR</name>
<reference key="1">
    <citation type="journal article" date="2003" name="Nucleic Acids Res.">
        <title>What's in the genome of a filamentous fungus? Analysis of the Neurospora genome sequence.</title>
        <authorList>
            <person name="Mannhaupt G."/>
            <person name="Montrone C."/>
            <person name="Haase D."/>
            <person name="Mewes H.-W."/>
            <person name="Aign V."/>
            <person name="Hoheisel J.D."/>
            <person name="Fartmann B."/>
            <person name="Nyakatura G."/>
            <person name="Kempken F."/>
            <person name="Maier J."/>
            <person name="Schulte U."/>
        </authorList>
    </citation>
    <scope>NUCLEOTIDE SEQUENCE [LARGE SCALE GENOMIC DNA]</scope>
    <source>
        <strain>ATCC 24698 / 74-OR23-1A / CBS 708.71 / DSM 1257 / FGSC 987</strain>
    </source>
</reference>
<reference key="2">
    <citation type="journal article" date="2003" name="Nature">
        <title>The genome sequence of the filamentous fungus Neurospora crassa.</title>
        <authorList>
            <person name="Galagan J.E."/>
            <person name="Calvo S.E."/>
            <person name="Borkovich K.A."/>
            <person name="Selker E.U."/>
            <person name="Read N.D."/>
            <person name="Jaffe D.B."/>
            <person name="FitzHugh W."/>
            <person name="Ma L.-J."/>
            <person name="Smirnov S."/>
            <person name="Purcell S."/>
            <person name="Rehman B."/>
            <person name="Elkins T."/>
            <person name="Engels R."/>
            <person name="Wang S."/>
            <person name="Nielsen C.B."/>
            <person name="Butler J."/>
            <person name="Endrizzi M."/>
            <person name="Qui D."/>
            <person name="Ianakiev P."/>
            <person name="Bell-Pedersen D."/>
            <person name="Nelson M.A."/>
            <person name="Werner-Washburne M."/>
            <person name="Selitrennikoff C.P."/>
            <person name="Kinsey J.A."/>
            <person name="Braun E.L."/>
            <person name="Zelter A."/>
            <person name="Schulte U."/>
            <person name="Kothe G.O."/>
            <person name="Jedd G."/>
            <person name="Mewes H.-W."/>
            <person name="Staben C."/>
            <person name="Marcotte E."/>
            <person name="Greenberg D."/>
            <person name="Roy A."/>
            <person name="Foley K."/>
            <person name="Naylor J."/>
            <person name="Stange-Thomann N."/>
            <person name="Barrett R."/>
            <person name="Gnerre S."/>
            <person name="Kamal M."/>
            <person name="Kamvysselis M."/>
            <person name="Mauceli E.W."/>
            <person name="Bielke C."/>
            <person name="Rudd S."/>
            <person name="Frishman D."/>
            <person name="Krystofova S."/>
            <person name="Rasmussen C."/>
            <person name="Metzenberg R.L."/>
            <person name="Perkins D.D."/>
            <person name="Kroken S."/>
            <person name="Cogoni C."/>
            <person name="Macino G."/>
            <person name="Catcheside D.E.A."/>
            <person name="Li W."/>
            <person name="Pratt R.J."/>
            <person name="Osmani S.A."/>
            <person name="DeSouza C.P.C."/>
            <person name="Glass N.L."/>
            <person name="Orbach M.J."/>
            <person name="Berglund J.A."/>
            <person name="Voelker R."/>
            <person name="Yarden O."/>
            <person name="Plamann M."/>
            <person name="Seiler S."/>
            <person name="Dunlap J.C."/>
            <person name="Radford A."/>
            <person name="Aramayo R."/>
            <person name="Natvig D.O."/>
            <person name="Alex L.A."/>
            <person name="Mannhaupt G."/>
            <person name="Ebbole D.J."/>
            <person name="Freitag M."/>
            <person name="Paulsen I."/>
            <person name="Sachs M.S."/>
            <person name="Lander E.S."/>
            <person name="Nusbaum C."/>
            <person name="Birren B.W."/>
        </authorList>
    </citation>
    <scope>NUCLEOTIDE SEQUENCE [LARGE SCALE GENOMIC DNA]</scope>
    <source>
        <strain>ATCC 24698 / 74-OR23-1A / CBS 708.71 / DSM 1257 / FGSC 987</strain>
    </source>
</reference>
<sequence length="228" mass="24975">MSGIWGWFGGGSAAQKRKDSPKNAILGLRTQLDMLQKRERHLQNQIDEQDAIARKNVSTNKTAAKQALRRKKVAESTLETTLGQITTLEQQINAIESANINRETLAAMQAAREAMGKIHGKLTPEKVDEEMAKLQEANDLSNEIATAITSANIGQPIDEGELEDELEKLQQEEVDSKLHETGGSIPVHDKISLPAAGTGALKGKEKAKAVVEDDEEEELRKLQAEMAM</sequence>
<protein>
    <recommendedName>
        <fullName>Vacuolar-sorting protein snf7</fullName>
    </recommendedName>
    <alternativeName>
        <fullName>Vacuolar protein-sorting-associated protein 32</fullName>
    </alternativeName>
</protein>
<comment type="function">
    <text evidence="1">Required for the sorting and concentration of proteins resulting in the entry of these proteins into the invaginating vesicles of the multivesicular body (MVB). Also required for the proteolytic cleavage of the transcription factor pacc-1 in response to alkaline ambient pH (By similarity).</text>
</comment>
<comment type="subunit">
    <text evidence="1">A component of the endosomal sorting required for transport complex III (ESCRT-III).</text>
</comment>
<comment type="subcellular location">
    <subcellularLocation>
        <location evidence="1">Cytoplasm</location>
    </subcellularLocation>
    <subcellularLocation>
        <location evidence="1">Endosome membrane</location>
        <topology evidence="1">Peripheral membrane protein</topology>
    </subcellularLocation>
</comment>
<comment type="similarity">
    <text evidence="3">Belongs to the SNF7 family.</text>
</comment>
<feature type="chain" id="PRO_0000211443" description="Vacuolar-sorting protein snf7">
    <location>
        <begin position="1"/>
        <end position="228"/>
    </location>
</feature>
<feature type="coiled-coil region" evidence="2">
    <location>
        <begin position="25"/>
        <end position="94"/>
    </location>
</feature>
<feature type="coiled-coil region" evidence="2">
    <location>
        <begin position="125"/>
        <end position="226"/>
    </location>
</feature>
<gene>
    <name type="primary">vsp-3</name>
    <name type="synonym">snf7</name>
    <name type="synonym">vps32</name>
    <name type="ORF">B9K17.010</name>
    <name type="ORF">NCU01282</name>
</gene>
<organism>
    <name type="scientific">Neurospora crassa (strain ATCC 24698 / 74-OR23-1A / CBS 708.71 / DSM 1257 / FGSC 987)</name>
    <dbReference type="NCBI Taxonomy" id="367110"/>
    <lineage>
        <taxon>Eukaryota</taxon>
        <taxon>Fungi</taxon>
        <taxon>Dikarya</taxon>
        <taxon>Ascomycota</taxon>
        <taxon>Pezizomycotina</taxon>
        <taxon>Sordariomycetes</taxon>
        <taxon>Sordariomycetidae</taxon>
        <taxon>Sordariales</taxon>
        <taxon>Sordariaceae</taxon>
        <taxon>Neurospora</taxon>
    </lineage>
</organism>